<organism>
    <name type="scientific">Cylindrophis ruffus</name>
    <name type="common">Red-tailed pipe snake</name>
    <dbReference type="NCBI Taxonomy" id="186578"/>
    <lineage>
        <taxon>Eukaryota</taxon>
        <taxon>Metazoa</taxon>
        <taxon>Chordata</taxon>
        <taxon>Craniata</taxon>
        <taxon>Vertebrata</taxon>
        <taxon>Euteleostomi</taxon>
        <taxon>Lepidosauria</taxon>
        <taxon>Squamata</taxon>
        <taxon>Bifurcata</taxon>
        <taxon>Unidentata</taxon>
        <taxon>Episquamata</taxon>
        <taxon>Toxicofera</taxon>
        <taxon>Serpentes</taxon>
        <taxon>Henophidia</taxon>
        <taxon>Cylindrophiidae</taxon>
        <taxon>Cylindrophis</taxon>
    </lineage>
</organism>
<protein>
    <recommendedName>
        <fullName evidence="3">Neurotrophic factor BDNF precursor form</fullName>
        <shortName>proBDNF</shortName>
    </recommendedName>
    <alternativeName>
        <fullName>Brain-derived neurotrophic factor</fullName>
    </alternativeName>
    <component>
        <recommendedName>
            <fullName>Neurotrophic factor BDNF</fullName>
        </recommendedName>
    </component>
</protein>
<comment type="function">
    <text evidence="1">Promotes the survival of neuronal populations that are all located either in the central nervous system or directly connected to it.</text>
</comment>
<comment type="subcellular location">
    <subcellularLocation>
        <location evidence="1">Secreted</location>
    </subcellularLocation>
</comment>
<comment type="similarity">
    <text evidence="3">Belongs to the NGF-beta family.</text>
</comment>
<gene>
    <name type="primary">BDNF</name>
</gene>
<evidence type="ECO:0000250" key="1"/>
<evidence type="ECO:0000255" key="2"/>
<evidence type="ECO:0000305" key="3"/>
<feature type="propeptide" id="PRO_0000346673" evidence="1">
    <location>
        <begin position="1" status="less than"/>
        <end position="108"/>
    </location>
</feature>
<feature type="chain" id="PRO_0000346674" description="Neurotrophic factor BDNF">
    <location>
        <begin position="109"/>
        <end position="216" status="greater than"/>
    </location>
</feature>
<feature type="glycosylation site" description="N-linked (GlcNAc...) asparagine" evidence="2">
    <location>
        <position position="101"/>
    </location>
</feature>
<feature type="disulfide bond" evidence="1">
    <location>
        <begin position="121"/>
        <end position="188"/>
    </location>
</feature>
<feature type="non-terminal residue">
    <location>
        <position position="1"/>
    </location>
</feature>
<feature type="non-terminal residue">
    <location>
        <position position="216"/>
    </location>
</feature>
<reference key="1">
    <citation type="journal article" date="2006" name="Mol. Phylogenet. Evol.">
        <title>Dispersal and vicariance: the complex evolutionary history of boid snakes.</title>
        <authorList>
            <person name="Noonan B.P."/>
            <person name="Chippindale P.T."/>
        </authorList>
    </citation>
    <scope>NUCLEOTIDE SEQUENCE [GENOMIC DNA]</scope>
</reference>
<proteinExistence type="inferred from homology"/>
<accession>Q1X701</accession>
<name>BDNF_CYLRU</name>
<sequence>PMKEVSIRGQGSLAYPGLRTQGNLETLNGPNDATRGLTSLADTFEHVIEELLDEQQVIQPSKENKDADLYSSRVMLSSQVPLEPPLLFLLEEYKNYLDAANMSMRVRRHSDPARRGELSVCDSTSEWVTAAEKKTAVDMSGATVTVLEKVPVPKGQLKQYFYETKCSSKGYAKEGCRGIDKRYWNSQCRTTQSYVRALTMDNKKRVGWRFIRIDTS</sequence>
<keyword id="KW-0165">Cleavage on pair of basic residues</keyword>
<keyword id="KW-1015">Disulfide bond</keyword>
<keyword id="KW-0325">Glycoprotein</keyword>
<keyword id="KW-0339">Growth factor</keyword>
<keyword id="KW-0964">Secreted</keyword>
<dbReference type="EMBL" id="AY988037">
    <property type="protein sequence ID" value="AAY44244.1"/>
    <property type="molecule type" value="Genomic_DNA"/>
</dbReference>
<dbReference type="SMR" id="Q1X701"/>
<dbReference type="GlyCosmos" id="Q1X701">
    <property type="glycosylation" value="1 site, No reported glycans"/>
</dbReference>
<dbReference type="GO" id="GO:0030424">
    <property type="term" value="C:axon"/>
    <property type="evidence" value="ECO:0007669"/>
    <property type="project" value="TreeGrafter"/>
</dbReference>
<dbReference type="GO" id="GO:0030425">
    <property type="term" value="C:dendrite"/>
    <property type="evidence" value="ECO:0007669"/>
    <property type="project" value="TreeGrafter"/>
</dbReference>
<dbReference type="GO" id="GO:0005615">
    <property type="term" value="C:extracellular space"/>
    <property type="evidence" value="ECO:0007669"/>
    <property type="project" value="TreeGrafter"/>
</dbReference>
<dbReference type="GO" id="GO:0008021">
    <property type="term" value="C:synaptic vesicle"/>
    <property type="evidence" value="ECO:0007669"/>
    <property type="project" value="TreeGrafter"/>
</dbReference>
<dbReference type="GO" id="GO:0008083">
    <property type="term" value="F:growth factor activity"/>
    <property type="evidence" value="ECO:0007669"/>
    <property type="project" value="UniProtKB-KW"/>
</dbReference>
<dbReference type="GO" id="GO:0005163">
    <property type="term" value="F:nerve growth factor receptor binding"/>
    <property type="evidence" value="ECO:0007669"/>
    <property type="project" value="TreeGrafter"/>
</dbReference>
<dbReference type="GO" id="GO:0007169">
    <property type="term" value="P:cell surface receptor protein tyrosine kinase signaling pathway"/>
    <property type="evidence" value="ECO:0007669"/>
    <property type="project" value="TreeGrafter"/>
</dbReference>
<dbReference type="GO" id="GO:0050804">
    <property type="term" value="P:modulation of chemical synaptic transmission"/>
    <property type="evidence" value="ECO:0007669"/>
    <property type="project" value="TreeGrafter"/>
</dbReference>
<dbReference type="GO" id="GO:0043524">
    <property type="term" value="P:negative regulation of neuron apoptotic process"/>
    <property type="evidence" value="ECO:0007669"/>
    <property type="project" value="TreeGrafter"/>
</dbReference>
<dbReference type="GO" id="GO:0021675">
    <property type="term" value="P:nerve development"/>
    <property type="evidence" value="ECO:0007669"/>
    <property type="project" value="TreeGrafter"/>
</dbReference>
<dbReference type="GO" id="GO:0038180">
    <property type="term" value="P:nerve growth factor signaling pathway"/>
    <property type="evidence" value="ECO:0007669"/>
    <property type="project" value="TreeGrafter"/>
</dbReference>
<dbReference type="GO" id="GO:0048812">
    <property type="term" value="P:neuron projection morphogenesis"/>
    <property type="evidence" value="ECO:0007669"/>
    <property type="project" value="TreeGrafter"/>
</dbReference>
<dbReference type="FunFam" id="2.10.90.10:FF:000002">
    <property type="entry name" value="Brain-derived neurotrophic factor"/>
    <property type="match status" value="1"/>
</dbReference>
<dbReference type="Gene3D" id="2.10.90.10">
    <property type="entry name" value="Cystine-knot cytokines"/>
    <property type="match status" value="1"/>
</dbReference>
<dbReference type="InterPro" id="IPR020430">
    <property type="entry name" value="Brain-der_neurotrophic_factor"/>
</dbReference>
<dbReference type="InterPro" id="IPR029034">
    <property type="entry name" value="Cystine-knot_cytokine"/>
</dbReference>
<dbReference type="InterPro" id="IPR020408">
    <property type="entry name" value="Nerve_growth_factor-like"/>
</dbReference>
<dbReference type="InterPro" id="IPR002072">
    <property type="entry name" value="Nerve_growth_factor-rel"/>
</dbReference>
<dbReference type="InterPro" id="IPR019846">
    <property type="entry name" value="Nerve_growth_factor_CS"/>
</dbReference>
<dbReference type="PANTHER" id="PTHR11589:SF3">
    <property type="entry name" value="BRAIN-DERIVED NEUROTROPHIC FACTOR"/>
    <property type="match status" value="1"/>
</dbReference>
<dbReference type="PANTHER" id="PTHR11589">
    <property type="entry name" value="NERVE GROWTH FACTOR NGF -RELATED"/>
    <property type="match status" value="1"/>
</dbReference>
<dbReference type="Pfam" id="PF00243">
    <property type="entry name" value="NGF"/>
    <property type="match status" value="1"/>
</dbReference>
<dbReference type="PIRSF" id="PIRSF001789">
    <property type="entry name" value="NGF"/>
    <property type="match status" value="1"/>
</dbReference>
<dbReference type="PRINTS" id="PR01912">
    <property type="entry name" value="BDNFACTOR"/>
</dbReference>
<dbReference type="PRINTS" id="PR00268">
    <property type="entry name" value="NGF"/>
</dbReference>
<dbReference type="SMART" id="SM00140">
    <property type="entry name" value="NGF"/>
    <property type="match status" value="1"/>
</dbReference>
<dbReference type="SUPFAM" id="SSF57501">
    <property type="entry name" value="Cystine-knot cytokines"/>
    <property type="match status" value="1"/>
</dbReference>
<dbReference type="PROSITE" id="PS00248">
    <property type="entry name" value="NGF_1"/>
    <property type="match status" value="1"/>
</dbReference>
<dbReference type="PROSITE" id="PS50270">
    <property type="entry name" value="NGF_2"/>
    <property type="match status" value="1"/>
</dbReference>